<evidence type="ECO:0000250" key="1">
    <source>
        <dbReference type="UniProtKB" id="P15556"/>
    </source>
</evidence>
<dbReference type="GO" id="GO:0003677">
    <property type="term" value="F:DNA binding"/>
    <property type="evidence" value="ECO:0007669"/>
    <property type="project" value="UniProtKB-KW"/>
</dbReference>
<dbReference type="GO" id="GO:0044071">
    <property type="term" value="P:symbiont-mediated perturbation of host cell cycle progression"/>
    <property type="evidence" value="ECO:0007669"/>
    <property type="project" value="UniProtKB-KW"/>
</dbReference>
<dbReference type="GO" id="GO:0098673">
    <property type="term" value="P:symbiont-mediated suppression of host DNA replication"/>
    <property type="evidence" value="ECO:0007669"/>
    <property type="project" value="UniProtKB-KW"/>
</dbReference>
<dbReference type="InterPro" id="IPR009514">
    <property type="entry name" value="Phage_Ndd"/>
</dbReference>
<dbReference type="Pfam" id="PF06591">
    <property type="entry name" value="Phage_T4_Ndd"/>
    <property type="match status" value="1"/>
</dbReference>
<comment type="function">
    <text evidence="1">Disorganizes the host nucleoid and inhibits replication, but without host DNA cleavage or degradation. Only the architecture of the nucleoid is affected. May act on the host chromosomal sequences that determine the structure of the nucleoid. Binds to dsDNA but not to ssDNA.</text>
</comment>
<name>NDD_BPR32</name>
<sequence length="152" mass="17147">MKYMTVTDLNNAGATVIGTIKGGEWFLGTPHKDILSKPGFYFLVSKLDGRPFSNPCVSARFYVGNQRSKQGFSAVLSHIRQRRSQLARTIANNNVPYTVFYLPASKMKPLTTGFGKGQLALAFTRNHHSEYQTLEEMNRMLADNFKFVLQAY</sequence>
<gene>
    <name type="primary">ndd</name>
</gene>
<protein>
    <recommendedName>
        <fullName>Nucleoid disruption protein</fullName>
    </recommendedName>
    <alternativeName>
        <fullName>Nuclear disruption protein</fullName>
    </alternativeName>
</protein>
<proteinExistence type="inferred from homology"/>
<organismHost>
    <name type="scientific">Escherichia coli</name>
    <dbReference type="NCBI Taxonomy" id="562"/>
</organismHost>
<organism>
    <name type="scientific">Enterobacteria phage RB32</name>
    <name type="common">Bacteriophage RB32</name>
    <dbReference type="NCBI Taxonomy" id="45406"/>
    <lineage>
        <taxon>Viruses</taxon>
        <taxon>Duplodnaviria</taxon>
        <taxon>Heunggongvirae</taxon>
        <taxon>Uroviricota</taxon>
        <taxon>Caudoviricetes</taxon>
        <taxon>Straboviridae</taxon>
        <taxon>Tevenvirinae</taxon>
        <taxon>Tequatrovirus</taxon>
    </lineage>
</organism>
<keyword id="KW-0238">DNA-binding</keyword>
<keyword id="KW-0945">Host-virus interaction</keyword>
<keyword id="KW-1248">Inhibition of host DNA replication by virus</keyword>
<keyword id="KW-1121">Modulation of host cell cycle by virus</keyword>
<reference key="1">
    <citation type="journal article" date="1994" name="Gene">
        <title>Direct PCR sequencing of the ndd gene of bacteriophage T4: identification of a product involved in bacterial nucleoid disruption.</title>
        <authorList>
            <person name="Bouet J.-Y."/>
            <person name="Woszczyk J."/>
            <person name="Repoila F."/>
            <person name="Francois V."/>
            <person name="Louarn J.-M."/>
            <person name="Krisch H.M."/>
        </authorList>
    </citation>
    <scope>NUCLEOTIDE SEQUENCE</scope>
</reference>
<accession>P69190</accession>
<accession>P42266</accession>
<feature type="chain" id="PRO_0000164963" description="Nucleoid disruption protein">
    <location>
        <begin position="1"/>
        <end position="152"/>
    </location>
</feature>